<dbReference type="PIR" id="A27760">
    <property type="entry name" value="LBRF1S"/>
</dbReference>
<dbReference type="RefSeq" id="WP_002720422.1">
    <property type="nucleotide sequence ID" value="NZ_WTFI01000017.1"/>
</dbReference>
<dbReference type="PDB" id="4V9G">
    <property type="method" value="X-ray"/>
    <property type="resolution" value="7.78 A"/>
    <property type="chains" value="A1/A2/A3/A5/A7/AD/AF/AJ/AN/AP/AT/AV/AX/AZ/B1/B2/B3/B5/B7/BD/BF/BJ/BN/BP/BT/BV/BX/BZ=1-58"/>
</dbReference>
<dbReference type="PDB" id="7F0L">
    <property type="method" value="EM"/>
    <property type="resolution" value="2.94 A"/>
    <property type="chains" value="5/7=1-54"/>
</dbReference>
<dbReference type="PDBsum" id="4V9G"/>
<dbReference type="PDBsum" id="7F0L"/>
<dbReference type="EMDB" id="EMD-31400"/>
<dbReference type="SMR" id="P0C0X9"/>
<dbReference type="GeneID" id="67446991"/>
<dbReference type="OMA" id="NWLEGPR"/>
<dbReference type="GO" id="GO:0019866">
    <property type="term" value="C:organelle inner membrane"/>
    <property type="evidence" value="ECO:0007669"/>
    <property type="project" value="InterPro"/>
</dbReference>
<dbReference type="GO" id="GO:0005886">
    <property type="term" value="C:plasma membrane"/>
    <property type="evidence" value="ECO:0007669"/>
    <property type="project" value="UniProtKB-SubCell"/>
</dbReference>
<dbReference type="GO" id="GO:0030077">
    <property type="term" value="C:plasma membrane light-harvesting complex"/>
    <property type="evidence" value="ECO:0007669"/>
    <property type="project" value="InterPro"/>
</dbReference>
<dbReference type="GO" id="GO:0042314">
    <property type="term" value="F:bacteriochlorophyll binding"/>
    <property type="evidence" value="ECO:0007669"/>
    <property type="project" value="UniProtKB-KW"/>
</dbReference>
<dbReference type="GO" id="GO:0045156">
    <property type="term" value="F:electron transporter, transferring electrons within the cyclic electron transport pathway of photosynthesis activity"/>
    <property type="evidence" value="ECO:0007669"/>
    <property type="project" value="InterPro"/>
</dbReference>
<dbReference type="GO" id="GO:0046872">
    <property type="term" value="F:metal ion binding"/>
    <property type="evidence" value="ECO:0007669"/>
    <property type="project" value="UniProtKB-KW"/>
</dbReference>
<dbReference type="GO" id="GO:0019684">
    <property type="term" value="P:photosynthesis, light reaction"/>
    <property type="evidence" value="ECO:0007669"/>
    <property type="project" value="InterPro"/>
</dbReference>
<dbReference type="Gene3D" id="4.10.220.20">
    <property type="entry name" value="Light-harvesting complex"/>
    <property type="match status" value="1"/>
</dbReference>
<dbReference type="InterPro" id="IPR000066">
    <property type="entry name" value="Antenna_a/b"/>
</dbReference>
<dbReference type="InterPro" id="IPR018332">
    <property type="entry name" value="Antenna_alpha"/>
</dbReference>
<dbReference type="InterPro" id="IPR002361">
    <property type="entry name" value="Antenna_alpha_CS"/>
</dbReference>
<dbReference type="InterPro" id="IPR035889">
    <property type="entry name" value="Light-harvesting_complex"/>
</dbReference>
<dbReference type="NCBIfam" id="NF040861">
    <property type="entry name" value="pufA_517_ASD"/>
    <property type="match status" value="1"/>
</dbReference>
<dbReference type="Pfam" id="PF00556">
    <property type="entry name" value="LHC"/>
    <property type="match status" value="1"/>
</dbReference>
<dbReference type="PRINTS" id="PR00673">
    <property type="entry name" value="LIGHTHARVSTA"/>
</dbReference>
<dbReference type="SUPFAM" id="SSF56918">
    <property type="entry name" value="Light-harvesting complex subunits"/>
    <property type="match status" value="1"/>
</dbReference>
<dbReference type="PROSITE" id="PS00968">
    <property type="entry name" value="ANTENNA_COMP_ALPHA"/>
    <property type="match status" value="1"/>
</dbReference>
<sequence>MSKFYKIWMIFDPRRVFVAQGVFLFLLAVMIHLILLSTPSYNWLEISAAKYNRVAVAE</sequence>
<gene>
    <name type="primary">pufA</name>
</gene>
<feature type="chain" id="PRO_0000099801" description="Light-harvesting protein B-875 alpha chain">
    <location>
        <begin position="1"/>
        <end position="58"/>
    </location>
</feature>
<feature type="topological domain" description="Cytoplasmic" evidence="1">
    <location>
        <begin position="1"/>
        <end position="15"/>
    </location>
</feature>
<feature type="transmembrane region" description="Helical" evidence="1">
    <location>
        <begin position="16"/>
        <end position="36"/>
    </location>
</feature>
<feature type="topological domain" description="Periplasmic" evidence="1">
    <location>
        <begin position="37"/>
        <end position="58"/>
    </location>
</feature>
<feature type="binding site" description="axial binding residue" evidence="1">
    <location>
        <position position="32"/>
    </location>
    <ligand>
        <name>a bacteriochlorophyll</name>
        <dbReference type="ChEBI" id="CHEBI:38201"/>
    </ligand>
    <ligandPart>
        <name>Mg</name>
        <dbReference type="ChEBI" id="CHEBI:25107"/>
    </ligandPart>
</feature>
<feature type="modified residue" description="N-formylmethionine" evidence="2">
    <location>
        <position position="1"/>
    </location>
</feature>
<feature type="helix" evidence="4">
    <location>
        <begin position="4"/>
        <end position="9"/>
    </location>
</feature>
<feature type="helix" evidence="4">
    <location>
        <begin position="13"/>
        <end position="37"/>
    </location>
</feature>
<feature type="turn" evidence="4">
    <location>
        <begin position="39"/>
        <end position="41"/>
    </location>
</feature>
<feature type="helix" evidence="4">
    <location>
        <begin position="43"/>
        <end position="50"/>
    </location>
</feature>
<reference key="1">
    <citation type="journal article" date="1984" name="Hoppe-Seyler's Z. Physiol. Chem.">
        <title>The light-harvesting polypeptides of Rhodopseudomonas sphaeroides R-26.1. I. Isolation, purification and sequence analyses.</title>
        <authorList>
            <person name="Theiler R."/>
            <person name="Suter F."/>
            <person name="Wiemken V."/>
            <person name="Zuber H."/>
        </authorList>
    </citation>
    <scope>PROTEIN SEQUENCE</scope>
    <scope>FORMYLATION AT MET-1</scope>
    <source>
        <strain>R-26.1</strain>
    </source>
</reference>
<keyword id="KW-0002">3D-structure</keyword>
<keyword id="KW-0042">Antenna complex</keyword>
<keyword id="KW-0076">Bacteriochlorophyll</keyword>
<keyword id="KW-0997">Cell inner membrane</keyword>
<keyword id="KW-1003">Cell membrane</keyword>
<keyword id="KW-0148">Chlorophyll</keyword>
<keyword id="KW-0157">Chromophore</keyword>
<keyword id="KW-0903">Direct protein sequencing</keyword>
<keyword id="KW-0291">Formylation</keyword>
<keyword id="KW-0437">Light-harvesting polypeptide</keyword>
<keyword id="KW-0460">Magnesium</keyword>
<keyword id="KW-0472">Membrane</keyword>
<keyword id="KW-0479">Metal-binding</keyword>
<keyword id="KW-0812">Transmembrane</keyword>
<keyword id="KW-1133">Transmembrane helix</keyword>
<protein>
    <recommendedName>
        <fullName>Light-harvesting protein B-875 alpha chain</fullName>
    </recommendedName>
    <alternativeName>
        <fullName>Antenna pigment protein alpha chain</fullName>
    </alternativeName>
    <alternativeName>
        <fullName>LH-1</fullName>
    </alternativeName>
</protein>
<accession>P0C0X9</accession>
<accession>P02949</accession>
<proteinExistence type="evidence at protein level"/>
<comment type="function">
    <text>Antenna complexes are light-harvesting systems, which transfer the excitation energy to the reaction centers.</text>
</comment>
<comment type="subunit">
    <text>The core complex is formed by different alpha and beta chains, binding bacteriochlorophyll molecules, and arranged most probably in tetrameric structures disposed around the reaction center. The non-pigmented gamma chains may constitute additional components.</text>
</comment>
<comment type="subcellular location">
    <subcellularLocation>
        <location>Cell inner membrane</location>
        <topology>Single-pass type II membrane protein</topology>
    </subcellularLocation>
</comment>
<comment type="similarity">
    <text evidence="3">Belongs to the antenna complex alpha subunit family.</text>
</comment>
<organism>
    <name type="scientific">Cereibacter sphaeroides</name>
    <name type="common">Rhodobacter sphaeroides</name>
    <dbReference type="NCBI Taxonomy" id="1063"/>
    <lineage>
        <taxon>Bacteria</taxon>
        <taxon>Pseudomonadati</taxon>
        <taxon>Pseudomonadota</taxon>
        <taxon>Alphaproteobacteria</taxon>
        <taxon>Rhodobacterales</taxon>
        <taxon>Paracoccaceae</taxon>
        <taxon>Cereibacter</taxon>
    </lineage>
</organism>
<name>LHA1_CERSP</name>
<evidence type="ECO:0000255" key="1"/>
<evidence type="ECO:0000269" key="2">
    <source>
    </source>
</evidence>
<evidence type="ECO:0000305" key="3"/>
<evidence type="ECO:0007829" key="4">
    <source>
        <dbReference type="PDB" id="7F0L"/>
    </source>
</evidence>